<gene>
    <name type="primary">HMGB4</name>
    <name type="synonym">HMGG</name>
    <name type="synonym">HMGGAMMA</name>
    <name type="synonym">NFD04</name>
    <name type="synonym">NFD4</name>
    <name type="ordered locus">At2g17560</name>
    <name type="ORF">MJB20.12</name>
</gene>
<sequence>MKGGESKAEATSTDQRLKTRGRKAGKKTKKDPNQPKRPPSAFFVFLEDFRKEFNLANPNNKSVATVGKAAGARWKAMTDEDKAPYVAKAESRKTEYIKNVQQYNLKLASGTNREEDDSDKSKSEVDEAVSEEEAEDDD</sequence>
<keyword id="KW-0025">Alternative splicing</keyword>
<keyword id="KW-0963">Cytoplasm</keyword>
<keyword id="KW-0238">DNA-binding</keyword>
<keyword id="KW-0539">Nucleus</keyword>
<keyword id="KW-0597">Phosphoprotein</keyword>
<keyword id="KW-1185">Reference proteome</keyword>
<protein>
    <recommendedName>
        <fullName>High mobility group B protein 4</fullName>
    </recommendedName>
    <alternativeName>
        <fullName>High mobility group protein G</fullName>
        <shortName>AtHMGgamma</shortName>
        <shortName>HMG gamma</shortName>
    </alternativeName>
    <alternativeName>
        <fullName>Nucleosome/chromatin assembly factor group D 04</fullName>
        <shortName>Nucleosome/chromatin assembly factor group D 4</shortName>
    </alternativeName>
</protein>
<organism>
    <name type="scientific">Arabidopsis thaliana</name>
    <name type="common">Mouse-ear cress</name>
    <dbReference type="NCBI Taxonomy" id="3702"/>
    <lineage>
        <taxon>Eukaryota</taxon>
        <taxon>Viridiplantae</taxon>
        <taxon>Streptophyta</taxon>
        <taxon>Embryophyta</taxon>
        <taxon>Tracheophyta</taxon>
        <taxon>Spermatophyta</taxon>
        <taxon>Magnoliopsida</taxon>
        <taxon>eudicotyledons</taxon>
        <taxon>Gunneridae</taxon>
        <taxon>Pentapetalae</taxon>
        <taxon>rosids</taxon>
        <taxon>malvids</taxon>
        <taxon>Brassicales</taxon>
        <taxon>Brassicaceae</taxon>
        <taxon>Camelineae</taxon>
        <taxon>Arabidopsis</taxon>
    </lineage>
</organism>
<feature type="chain" id="PRO_0000399930" description="High mobility group B protein 4">
    <location>
        <begin position="1"/>
        <end position="138"/>
    </location>
</feature>
<feature type="DNA-binding region" description="HMG box" evidence="2">
    <location>
        <begin position="35"/>
        <end position="104"/>
    </location>
</feature>
<feature type="region of interest" description="Disordered" evidence="3">
    <location>
        <begin position="1"/>
        <end position="41"/>
    </location>
</feature>
<feature type="region of interest" description="Disordered" evidence="3">
    <location>
        <begin position="105"/>
        <end position="138"/>
    </location>
</feature>
<feature type="compositionally biased region" description="Basic residues" evidence="3">
    <location>
        <begin position="18"/>
        <end position="29"/>
    </location>
</feature>
<feature type="compositionally biased region" description="Acidic residues" evidence="3">
    <location>
        <begin position="126"/>
        <end position="138"/>
    </location>
</feature>
<feature type="modified residue" description="Phosphoserine" evidence="1">
    <location>
        <position position="123"/>
    </location>
</feature>
<feature type="modified residue" description="Phosphoserine" evidence="9 10">
    <location>
        <position position="130"/>
    </location>
</feature>
<feature type="splice variant" id="VSP_039944" description="In isoform 2." evidence="7">
    <location>
        <begin position="129"/>
        <end position="132"/>
    </location>
</feature>
<feature type="sequence conflict" description="In Ref. 1; CAA74403." evidence="8" ref="1">
    <original>E</original>
    <variation>G</variation>
    <location>
        <position position="9"/>
    </location>
</feature>
<feature type="sequence conflict" description="In Ref. 7; AAM64404." evidence="8" ref="7">
    <original>K</original>
    <variation>N</variation>
    <location>
        <position position="26"/>
    </location>
</feature>
<feature type="sequence conflict" description="In Ref. 7; AAM64404 and 1; CAA74403." evidence="8" ref="7 1">
    <original>A</original>
    <variation>S</variation>
    <location>
        <position position="76"/>
    </location>
</feature>
<feature type="sequence conflict" description="In Ref. 5; AAK43965." evidence="8" ref="5">
    <original>R</original>
    <variation>I</variation>
    <location>
        <position position="92"/>
    </location>
</feature>
<reference key="1">
    <citation type="journal article" date="1997" name="Eur. J. Biochem.">
        <title>Variability in Arabidopsis thaliana chromosomal high-mobility-group-1-like proteins.</title>
        <authorList>
            <person name="Stemmer C."/>
            <person name="Ritt C."/>
            <person name="Igloi G.L."/>
            <person name="Grimm R."/>
            <person name="Grasser K.D."/>
        </authorList>
    </citation>
    <scope>NUCLEOTIDE SEQUENCE [MRNA] (ISOFORM 1)</scope>
    <scope>FUNCTION</scope>
    <scope>TISSUE SPECIFICITY</scope>
    <source>
        <tissue>Leaf</tissue>
    </source>
</reference>
<reference key="2">
    <citation type="submission" date="1993-11" db="EMBL/GenBank/DDBJ databases">
        <title>The Arabidopsis thaliana transcribed genome: the GDR cDNA program.</title>
        <authorList>
            <person name="Cooke R."/>
            <person name="Laudie M."/>
            <person name="Raynal M."/>
            <person name="Delseny M."/>
        </authorList>
    </citation>
    <scope>NUCLEOTIDE SEQUENCE [LARGE SCALE MRNA] (ISOFORM 1)</scope>
    <source>
        <strain>cv. Columbia</strain>
        <tissue>Protoplast</tissue>
    </source>
</reference>
<reference key="3">
    <citation type="journal article" date="1999" name="Nature">
        <title>Sequence and analysis of chromosome 2 of the plant Arabidopsis thaliana.</title>
        <authorList>
            <person name="Lin X."/>
            <person name="Kaul S."/>
            <person name="Rounsley S.D."/>
            <person name="Shea T.P."/>
            <person name="Benito M.-I."/>
            <person name="Town C.D."/>
            <person name="Fujii C.Y."/>
            <person name="Mason T.M."/>
            <person name="Bowman C.L."/>
            <person name="Barnstead M.E."/>
            <person name="Feldblyum T.V."/>
            <person name="Buell C.R."/>
            <person name="Ketchum K.A."/>
            <person name="Lee J.J."/>
            <person name="Ronning C.M."/>
            <person name="Koo H.L."/>
            <person name="Moffat K.S."/>
            <person name="Cronin L.A."/>
            <person name="Shen M."/>
            <person name="Pai G."/>
            <person name="Van Aken S."/>
            <person name="Umayam L."/>
            <person name="Tallon L.J."/>
            <person name="Gill J.E."/>
            <person name="Adams M.D."/>
            <person name="Carrera A.J."/>
            <person name="Creasy T.H."/>
            <person name="Goodman H.M."/>
            <person name="Somerville C.R."/>
            <person name="Copenhaver G.P."/>
            <person name="Preuss D."/>
            <person name="Nierman W.C."/>
            <person name="White O."/>
            <person name="Eisen J.A."/>
            <person name="Salzberg S.L."/>
            <person name="Fraser C.M."/>
            <person name="Venter J.C."/>
        </authorList>
    </citation>
    <scope>NUCLEOTIDE SEQUENCE [LARGE SCALE GENOMIC DNA]</scope>
    <source>
        <strain>cv. Columbia</strain>
    </source>
</reference>
<reference key="4">
    <citation type="journal article" date="2017" name="Plant J.">
        <title>Araport11: a complete reannotation of the Arabidopsis thaliana reference genome.</title>
        <authorList>
            <person name="Cheng C.Y."/>
            <person name="Krishnakumar V."/>
            <person name="Chan A.P."/>
            <person name="Thibaud-Nissen F."/>
            <person name="Schobel S."/>
            <person name="Town C.D."/>
        </authorList>
    </citation>
    <scope>GENOME REANNOTATION</scope>
    <source>
        <strain>cv. Columbia</strain>
    </source>
</reference>
<reference key="5">
    <citation type="journal article" date="2003" name="Science">
        <title>Empirical analysis of transcriptional activity in the Arabidopsis genome.</title>
        <authorList>
            <person name="Yamada K."/>
            <person name="Lim J."/>
            <person name="Dale J.M."/>
            <person name="Chen H."/>
            <person name="Shinn P."/>
            <person name="Palm C.J."/>
            <person name="Southwick A.M."/>
            <person name="Wu H.C."/>
            <person name="Kim C.J."/>
            <person name="Nguyen M."/>
            <person name="Pham P.K."/>
            <person name="Cheuk R.F."/>
            <person name="Karlin-Newmann G."/>
            <person name="Liu S.X."/>
            <person name="Lam B."/>
            <person name="Sakano H."/>
            <person name="Wu T."/>
            <person name="Yu G."/>
            <person name="Miranda M."/>
            <person name="Quach H.L."/>
            <person name="Tripp M."/>
            <person name="Chang C.H."/>
            <person name="Lee J.M."/>
            <person name="Toriumi M.J."/>
            <person name="Chan M.M."/>
            <person name="Tang C.C."/>
            <person name="Onodera C.S."/>
            <person name="Deng J.M."/>
            <person name="Akiyama K."/>
            <person name="Ansari Y."/>
            <person name="Arakawa T."/>
            <person name="Banh J."/>
            <person name="Banno F."/>
            <person name="Bowser L."/>
            <person name="Brooks S.Y."/>
            <person name="Carninci P."/>
            <person name="Chao Q."/>
            <person name="Choy N."/>
            <person name="Enju A."/>
            <person name="Goldsmith A.D."/>
            <person name="Gurjal M."/>
            <person name="Hansen N.F."/>
            <person name="Hayashizaki Y."/>
            <person name="Johnson-Hopson C."/>
            <person name="Hsuan V.W."/>
            <person name="Iida K."/>
            <person name="Karnes M."/>
            <person name="Khan S."/>
            <person name="Koesema E."/>
            <person name="Ishida J."/>
            <person name="Jiang P.X."/>
            <person name="Jones T."/>
            <person name="Kawai J."/>
            <person name="Kamiya A."/>
            <person name="Meyers C."/>
            <person name="Nakajima M."/>
            <person name="Narusaka M."/>
            <person name="Seki M."/>
            <person name="Sakurai T."/>
            <person name="Satou M."/>
            <person name="Tamse R."/>
            <person name="Vaysberg M."/>
            <person name="Wallender E.K."/>
            <person name="Wong C."/>
            <person name="Yamamura Y."/>
            <person name="Yuan S."/>
            <person name="Shinozaki K."/>
            <person name="Davis R.W."/>
            <person name="Theologis A."/>
            <person name="Ecker J.R."/>
        </authorList>
    </citation>
    <scope>NUCLEOTIDE SEQUENCE [LARGE SCALE MRNA] (ISOFORM 1)</scope>
    <source>
        <strain>cv. Columbia</strain>
    </source>
</reference>
<reference key="6">
    <citation type="journal article" date="2009" name="DNA Res.">
        <title>Analysis of multiple occurrences of alternative splicing events in Arabidopsis thaliana using novel sequenced full-length cDNAs.</title>
        <authorList>
            <person name="Iida K."/>
            <person name="Fukami-Kobayashi K."/>
            <person name="Toyoda A."/>
            <person name="Sakaki Y."/>
            <person name="Kobayashi M."/>
            <person name="Seki M."/>
            <person name="Shinozaki K."/>
        </authorList>
    </citation>
    <scope>NUCLEOTIDE SEQUENCE [LARGE SCALE MRNA] (ISOFORM 2)</scope>
    <source>
        <strain>cv. Columbia</strain>
        <tissue>Rosette leaf</tissue>
    </source>
</reference>
<reference key="7">
    <citation type="submission" date="2002-03" db="EMBL/GenBank/DDBJ databases">
        <title>Full-length cDNA from Arabidopsis thaliana.</title>
        <authorList>
            <person name="Brover V.V."/>
            <person name="Troukhan M.E."/>
            <person name="Alexandrov N.A."/>
            <person name="Lu Y.-P."/>
            <person name="Flavell R.B."/>
            <person name="Feldmann K.A."/>
        </authorList>
    </citation>
    <scope>NUCLEOTIDE SEQUENCE [LARGE SCALE MRNA] (ISOFORM 1)</scope>
</reference>
<reference key="8">
    <citation type="journal article" date="2003" name="Biochemistry">
        <title>Phosphorylation of maize and Arabidopsis HMGB proteins by protein kinase CK2alpha.</title>
        <authorList>
            <person name="Stemmer C."/>
            <person name="Leeming D.J."/>
            <person name="Franssen L."/>
            <person name="Grimm R."/>
            <person name="Grasser K.D."/>
        </authorList>
    </citation>
    <scope>PHOSPHORYLATION</scope>
</reference>
<reference key="9">
    <citation type="journal article" date="2007" name="Plant Cell Physiol.">
        <title>Characterization of transgenic Arabidopsis plants overexpressing high mobility group B proteins under high salinity, drought or cold stress.</title>
        <authorList>
            <person name="Kwak K.J."/>
            <person name="Kim J.Y."/>
            <person name="Kim Y.O."/>
            <person name="Kang H."/>
        </authorList>
    </citation>
    <scope>TISSUE SPECIFICITY</scope>
    <scope>INDUCTION BY COLD</scope>
</reference>
<reference key="10">
    <citation type="journal article" date="2009" name="J. Proteomics">
        <title>Phosphoproteomic analysis of nuclei-enriched fractions from Arabidopsis thaliana.</title>
        <authorList>
            <person name="Jones A.M.E."/>
            <person name="MacLean D."/>
            <person name="Studholme D.J."/>
            <person name="Serna-Sanz A."/>
            <person name="Andreasson E."/>
            <person name="Rathjen J.P."/>
            <person name="Peck S.C."/>
        </authorList>
    </citation>
    <scope>PHOSPHORYLATION [LARGE SCALE ANALYSIS] AT SER-130</scope>
    <scope>IDENTIFICATION BY MASS SPECTROMETRY [LARGE SCALE ANALYSIS]</scope>
    <source>
        <strain>cv. Columbia</strain>
    </source>
</reference>
<reference key="11">
    <citation type="journal article" date="2009" name="Plant Physiol.">
        <title>Large-scale Arabidopsis phosphoproteome profiling reveals novel chloroplast kinase substrates and phosphorylation networks.</title>
        <authorList>
            <person name="Reiland S."/>
            <person name="Messerli G."/>
            <person name="Baerenfaller K."/>
            <person name="Gerrits B."/>
            <person name="Endler A."/>
            <person name="Grossmann J."/>
            <person name="Gruissem W."/>
            <person name="Baginsky S."/>
        </authorList>
    </citation>
    <scope>PHOSPHORYLATION [LARGE SCALE ANALYSIS] AT SER-130</scope>
    <scope>IDENTIFICATION BY MASS SPECTROMETRY [LARGE SCALE ANALYSIS]</scope>
</reference>
<reference key="12">
    <citation type="journal article" date="2010" name="Biochim. Biophys. Acta">
        <title>The role of chromosomal HMGB proteins in plants.</title>
        <authorList>
            <person name="Pedersen D.S."/>
            <person name="Grasser K.D."/>
        </authorList>
    </citation>
    <scope>REVIEW</scope>
    <scope>SUBCELLULAR LOCATION</scope>
</reference>
<comment type="function">
    <text evidence="6">Binds preferentially double-stranded DNA.</text>
</comment>
<comment type="subcellular location">
    <subcellularLocation>
        <location evidence="2 5">Nucleus</location>
    </subcellularLocation>
    <subcellularLocation>
        <location evidence="5">Cytoplasm</location>
        <location evidence="5">Cytosol</location>
    </subcellularLocation>
</comment>
<comment type="alternative products">
    <event type="alternative splicing"/>
    <isoform>
        <id>Q42344-1</id>
        <name>1</name>
        <sequence type="displayed"/>
    </isoform>
    <isoform>
        <id>Q42344-2</id>
        <name>2</name>
        <sequence type="described" ref="VSP_039944"/>
    </isoform>
</comment>
<comment type="tissue specificity">
    <text evidence="4 6">Mostly expressed roots and flowers, and, to a lower extent, in stems and leaves.</text>
</comment>
<comment type="induction">
    <text evidence="4">Up-regulated by cold stress.</text>
</comment>
<comment type="similarity">
    <text evidence="8">Belongs to the HMGB family.</text>
</comment>
<evidence type="ECO:0000250" key="1">
    <source>
        <dbReference type="UniProtKB" id="O49595"/>
    </source>
</evidence>
<evidence type="ECO:0000255" key="2">
    <source>
        <dbReference type="PROSITE-ProRule" id="PRU00267"/>
    </source>
</evidence>
<evidence type="ECO:0000256" key="3">
    <source>
        <dbReference type="SAM" id="MobiDB-lite"/>
    </source>
</evidence>
<evidence type="ECO:0000269" key="4">
    <source>
    </source>
</evidence>
<evidence type="ECO:0000269" key="5">
    <source>
    </source>
</evidence>
<evidence type="ECO:0000269" key="6">
    <source>
    </source>
</evidence>
<evidence type="ECO:0000303" key="7">
    <source>
    </source>
</evidence>
<evidence type="ECO:0000305" key="8"/>
<evidence type="ECO:0007744" key="9">
    <source>
    </source>
</evidence>
<evidence type="ECO:0007744" key="10">
    <source>
    </source>
</evidence>
<dbReference type="EMBL" id="Y14074">
    <property type="protein sequence ID" value="CAA74403.1"/>
    <property type="molecule type" value="mRNA"/>
</dbReference>
<dbReference type="EMBL" id="F20020">
    <property type="protein sequence ID" value="CAA23382.1"/>
    <property type="molecule type" value="mRNA"/>
</dbReference>
<dbReference type="EMBL" id="AC007584">
    <property type="protein sequence ID" value="AAD32913.1"/>
    <property type="molecule type" value="Genomic_DNA"/>
</dbReference>
<dbReference type="EMBL" id="CP002685">
    <property type="protein sequence ID" value="AEC06651.1"/>
    <property type="molecule type" value="Genomic_DNA"/>
</dbReference>
<dbReference type="EMBL" id="CP002685">
    <property type="protein sequence ID" value="AEC06652.1"/>
    <property type="molecule type" value="Genomic_DNA"/>
</dbReference>
<dbReference type="EMBL" id="CP002685">
    <property type="protein sequence ID" value="AEC06653.1"/>
    <property type="molecule type" value="Genomic_DNA"/>
</dbReference>
<dbReference type="EMBL" id="AF370150">
    <property type="protein sequence ID" value="AAK43965.1"/>
    <property type="molecule type" value="mRNA"/>
</dbReference>
<dbReference type="EMBL" id="AF370562">
    <property type="protein sequence ID" value="AAK49570.1"/>
    <property type="molecule type" value="mRNA"/>
</dbReference>
<dbReference type="EMBL" id="AY150467">
    <property type="protein sequence ID" value="AAN12992.1"/>
    <property type="molecule type" value="mRNA"/>
</dbReference>
<dbReference type="EMBL" id="AK317044">
    <property type="protein sequence ID" value="BAH19737.1"/>
    <property type="molecule type" value="mRNA"/>
</dbReference>
<dbReference type="EMBL" id="AY086336">
    <property type="protein sequence ID" value="AAM64404.1"/>
    <property type="molecule type" value="mRNA"/>
</dbReference>
<dbReference type="PIR" id="F84553">
    <property type="entry name" value="F84553"/>
</dbReference>
<dbReference type="PIR" id="T51596">
    <property type="entry name" value="T51596"/>
</dbReference>
<dbReference type="RefSeq" id="NP_001031364.2">
    <molecule id="Q42344-1"/>
    <property type="nucleotide sequence ID" value="NM_001036287.3"/>
</dbReference>
<dbReference type="RefSeq" id="NP_001077909.1">
    <molecule id="Q42344-2"/>
    <property type="nucleotide sequence ID" value="NM_001084440.1"/>
</dbReference>
<dbReference type="RefSeq" id="NP_179347.1">
    <molecule id="Q42344-1"/>
    <property type="nucleotide sequence ID" value="NM_127310.3"/>
</dbReference>
<dbReference type="SMR" id="Q42344"/>
<dbReference type="BioGRID" id="1620">
    <property type="interactions" value="6"/>
</dbReference>
<dbReference type="FunCoup" id="Q42344">
    <property type="interactions" value="2878"/>
</dbReference>
<dbReference type="IntAct" id="Q42344">
    <property type="interactions" value="5"/>
</dbReference>
<dbReference type="STRING" id="3702.Q42344"/>
<dbReference type="iPTMnet" id="Q42344"/>
<dbReference type="PaxDb" id="3702-AT2G17560.1"/>
<dbReference type="ProteomicsDB" id="232097">
    <molecule id="Q42344-1"/>
</dbReference>
<dbReference type="EnsemblPlants" id="AT2G17560.1">
    <molecule id="Q42344-1"/>
    <property type="protein sequence ID" value="AT2G17560.1"/>
    <property type="gene ID" value="AT2G17560"/>
</dbReference>
<dbReference type="EnsemblPlants" id="AT2G17560.2">
    <molecule id="Q42344-1"/>
    <property type="protein sequence ID" value="AT2G17560.2"/>
    <property type="gene ID" value="AT2G17560"/>
</dbReference>
<dbReference type="EnsemblPlants" id="AT2G17560.3">
    <molecule id="Q42344-2"/>
    <property type="protein sequence ID" value="AT2G17560.3"/>
    <property type="gene ID" value="AT2G17560"/>
</dbReference>
<dbReference type="GeneID" id="816263"/>
<dbReference type="Gramene" id="AT2G17560.1">
    <molecule id="Q42344-1"/>
    <property type="protein sequence ID" value="AT2G17560.1"/>
    <property type="gene ID" value="AT2G17560"/>
</dbReference>
<dbReference type="Gramene" id="AT2G17560.2">
    <molecule id="Q42344-1"/>
    <property type="protein sequence ID" value="AT2G17560.2"/>
    <property type="gene ID" value="AT2G17560"/>
</dbReference>
<dbReference type="Gramene" id="AT2G17560.3">
    <molecule id="Q42344-2"/>
    <property type="protein sequence ID" value="AT2G17560.3"/>
    <property type="gene ID" value="AT2G17560"/>
</dbReference>
<dbReference type="KEGG" id="ath:AT2G17560"/>
<dbReference type="Araport" id="AT2G17560"/>
<dbReference type="TAIR" id="AT2G17560">
    <property type="gene designation" value="HMGB4"/>
</dbReference>
<dbReference type="eggNOG" id="KOG0381">
    <property type="taxonomic scope" value="Eukaryota"/>
</dbReference>
<dbReference type="InParanoid" id="Q42344"/>
<dbReference type="OMA" id="KMSAFAF"/>
<dbReference type="PhylomeDB" id="Q42344"/>
<dbReference type="CD-CODE" id="4299E36E">
    <property type="entry name" value="Nucleolus"/>
</dbReference>
<dbReference type="PRO" id="PR:Q42344"/>
<dbReference type="Proteomes" id="UP000006548">
    <property type="component" value="Chromosome 2"/>
</dbReference>
<dbReference type="ExpressionAtlas" id="Q42344">
    <property type="expression patterns" value="baseline and differential"/>
</dbReference>
<dbReference type="GO" id="GO:0000785">
    <property type="term" value="C:chromatin"/>
    <property type="evidence" value="ECO:0000304"/>
    <property type="project" value="TAIR"/>
</dbReference>
<dbReference type="GO" id="GO:0005737">
    <property type="term" value="C:cytoplasm"/>
    <property type="evidence" value="ECO:0000314"/>
    <property type="project" value="TAIR"/>
</dbReference>
<dbReference type="GO" id="GO:0005829">
    <property type="term" value="C:cytosol"/>
    <property type="evidence" value="ECO:0007669"/>
    <property type="project" value="UniProtKB-SubCell"/>
</dbReference>
<dbReference type="GO" id="GO:0005634">
    <property type="term" value="C:nucleus"/>
    <property type="evidence" value="ECO:0000314"/>
    <property type="project" value="TAIR"/>
</dbReference>
<dbReference type="GO" id="GO:0003682">
    <property type="term" value="F:chromatin binding"/>
    <property type="evidence" value="ECO:0000304"/>
    <property type="project" value="TAIR"/>
</dbReference>
<dbReference type="GO" id="GO:0003677">
    <property type="term" value="F:DNA binding"/>
    <property type="evidence" value="ECO:0000314"/>
    <property type="project" value="TAIR"/>
</dbReference>
<dbReference type="GO" id="GO:0003700">
    <property type="term" value="F:DNA-binding transcription factor activity"/>
    <property type="evidence" value="ECO:0000250"/>
    <property type="project" value="TAIR"/>
</dbReference>
<dbReference type="GO" id="GO:0030527">
    <property type="term" value="F:structural constituent of chromatin"/>
    <property type="evidence" value="ECO:0000304"/>
    <property type="project" value="TAIR"/>
</dbReference>
<dbReference type="GO" id="GO:0006325">
    <property type="term" value="P:chromatin organization"/>
    <property type="evidence" value="ECO:0000304"/>
    <property type="project" value="TAIR"/>
</dbReference>
<dbReference type="CDD" id="cd22005">
    <property type="entry name" value="HMG-box_AtHMGB1-like"/>
    <property type="match status" value="1"/>
</dbReference>
<dbReference type="FunFam" id="1.10.30.10:FF:000094">
    <property type="entry name" value="High mobility group B protein 4"/>
    <property type="match status" value="1"/>
</dbReference>
<dbReference type="Gene3D" id="1.10.30.10">
    <property type="entry name" value="High mobility group box domain"/>
    <property type="match status" value="1"/>
</dbReference>
<dbReference type="InterPro" id="IPR009071">
    <property type="entry name" value="HMG_box_dom"/>
</dbReference>
<dbReference type="InterPro" id="IPR036910">
    <property type="entry name" value="HMG_box_dom_sf"/>
</dbReference>
<dbReference type="InterPro" id="IPR031061">
    <property type="entry name" value="HMGB_plant"/>
</dbReference>
<dbReference type="PANTHER" id="PTHR46261">
    <property type="entry name" value="HIGH MOBILITY GROUP B PROTEIN 4-RELATED"/>
    <property type="match status" value="1"/>
</dbReference>
<dbReference type="PANTHER" id="PTHR46261:SF35">
    <property type="entry name" value="HIGH MOBILITY GROUP B PROTEIN 4-RELATED"/>
    <property type="match status" value="1"/>
</dbReference>
<dbReference type="Pfam" id="PF00505">
    <property type="entry name" value="HMG_box"/>
    <property type="match status" value="1"/>
</dbReference>
<dbReference type="SMART" id="SM00398">
    <property type="entry name" value="HMG"/>
    <property type="match status" value="1"/>
</dbReference>
<dbReference type="SUPFAM" id="SSF47095">
    <property type="entry name" value="HMG-box"/>
    <property type="match status" value="1"/>
</dbReference>
<dbReference type="PROSITE" id="PS50118">
    <property type="entry name" value="HMG_BOX_2"/>
    <property type="match status" value="1"/>
</dbReference>
<accession>Q42344</accession>
<accession>B9DG70</accession>
<accession>O49598</accession>
<accession>Q2V484</accession>
<accession>Q8LCY0</accession>
<accession>Q94K96</accession>
<proteinExistence type="evidence at protein level"/>
<name>HMGB4_ARATH</name>